<evidence type="ECO:0000255" key="1">
    <source>
        <dbReference type="PROSITE-ProRule" id="PRU00159"/>
    </source>
</evidence>
<evidence type="ECO:0000255" key="2">
    <source>
        <dbReference type="PROSITE-ProRule" id="PRU10027"/>
    </source>
</evidence>
<evidence type="ECO:0000256" key="3">
    <source>
        <dbReference type="SAM" id="MobiDB-lite"/>
    </source>
</evidence>
<reference key="1">
    <citation type="submission" date="1999-05" db="EMBL/GenBank/DDBJ databases">
        <title>Sequence analysis of 13 eukaryotic-like protein Ser/Thr kinases of Myxococcus xanthus, a developmental bacterium and significance of their coexistence with protein His kinases.</title>
        <authorList>
            <person name="Inouye S."/>
            <person name="Jain R."/>
            <person name="Ueki T."/>
            <person name="Nariya H."/>
            <person name="Xu C."/>
            <person name="Hsu M."/>
            <person name="Munoz-Dorado J."/>
            <person name="Farez-Vidal E."/>
            <person name="Inouye M."/>
        </authorList>
    </citation>
    <scope>NUCLEOTIDE SEQUENCE [GENOMIC DNA]</scope>
    <source>
        <strain>DZF1</strain>
    </source>
</reference>
<sequence>MRTPDTDEYVGKTIAYKYRVEALIGEGGMGKVFRARQLSLDKVVVLKVLRHTLLSDERTVARFQREAKAASRLNHPNSISVLDFGQAEDGALFIAMEYVAGQDLHQILSREWPLNEGRVVRIVSQVLSALSDAHGAGVIHRDLKPENIMVEPRRNEPDFVKVLDFGIAKITDSTDDGPALTRAGFVCGTPEYMSPEQARGSQLDHRSDLYAVGVILYQLMTGLLPFESDSAVGFATKHLTEEPPPPTRRRPDARISPAMERLILRALSKNPADRPASAEAFKAELQAVDKERRRMDSAPRRSANSSAVLAPLPRKSAASPQSDVRDATLPGWGNEVTMEATVRALPGVLEPLPANADAMAATRETTDSLVHTQPGAGGSSGVAFFFKSLTILLVVAALGFFAYYFFMGAGSGGAQDLPYALPTNAPVPAGANNSAVGASPDVPLYDRAIVSGARNVERALDVAREGDKALQRADVGLAATKYREAFSRSGDPELALKLGEVYWHRQNPDKEEARGWWNRHLREQPASKARALIEQRLNGAVAQPTSP</sequence>
<proteinExistence type="inferred from homology"/>
<accession>Q9XBQ0</accession>
<name>PKN3_MYXXA</name>
<dbReference type="EC" id="2.7.11.1"/>
<dbReference type="EMBL" id="AF159689">
    <property type="protein sequence ID" value="AAD42851.1"/>
    <property type="molecule type" value="Genomic_DNA"/>
</dbReference>
<dbReference type="SMR" id="Q9XBQ0"/>
<dbReference type="GO" id="GO:0005524">
    <property type="term" value="F:ATP binding"/>
    <property type="evidence" value="ECO:0007669"/>
    <property type="project" value="UniProtKB-KW"/>
</dbReference>
<dbReference type="GO" id="GO:0106310">
    <property type="term" value="F:protein serine kinase activity"/>
    <property type="evidence" value="ECO:0007669"/>
    <property type="project" value="RHEA"/>
</dbReference>
<dbReference type="GO" id="GO:0004674">
    <property type="term" value="F:protein serine/threonine kinase activity"/>
    <property type="evidence" value="ECO:0007669"/>
    <property type="project" value="UniProtKB-KW"/>
</dbReference>
<dbReference type="CDD" id="cd14014">
    <property type="entry name" value="STKc_PknB_like"/>
    <property type="match status" value="1"/>
</dbReference>
<dbReference type="FunFam" id="1.10.510.10:FF:000021">
    <property type="entry name" value="Serine/threonine protein kinase"/>
    <property type="match status" value="1"/>
</dbReference>
<dbReference type="Gene3D" id="3.30.200.20">
    <property type="entry name" value="Phosphorylase Kinase, domain 1"/>
    <property type="match status" value="1"/>
</dbReference>
<dbReference type="Gene3D" id="1.10.510.10">
    <property type="entry name" value="Transferase(Phosphotransferase) domain 1"/>
    <property type="match status" value="1"/>
</dbReference>
<dbReference type="InterPro" id="IPR011009">
    <property type="entry name" value="Kinase-like_dom_sf"/>
</dbReference>
<dbReference type="InterPro" id="IPR000719">
    <property type="entry name" value="Prot_kinase_dom"/>
</dbReference>
<dbReference type="InterPro" id="IPR017441">
    <property type="entry name" value="Protein_kinase_ATP_BS"/>
</dbReference>
<dbReference type="InterPro" id="IPR008271">
    <property type="entry name" value="Ser/Thr_kinase_AS"/>
</dbReference>
<dbReference type="PANTHER" id="PTHR43289">
    <property type="entry name" value="MITOGEN-ACTIVATED PROTEIN KINASE KINASE KINASE 20-RELATED"/>
    <property type="match status" value="1"/>
</dbReference>
<dbReference type="PANTHER" id="PTHR43289:SF6">
    <property type="entry name" value="SERINE_THREONINE-PROTEIN KINASE NEKL-3"/>
    <property type="match status" value="1"/>
</dbReference>
<dbReference type="Pfam" id="PF00069">
    <property type="entry name" value="Pkinase"/>
    <property type="match status" value="1"/>
</dbReference>
<dbReference type="SMART" id="SM00220">
    <property type="entry name" value="S_TKc"/>
    <property type="match status" value="1"/>
</dbReference>
<dbReference type="SUPFAM" id="SSF56112">
    <property type="entry name" value="Protein kinase-like (PK-like)"/>
    <property type="match status" value="1"/>
</dbReference>
<dbReference type="PROSITE" id="PS00107">
    <property type="entry name" value="PROTEIN_KINASE_ATP"/>
    <property type="match status" value="1"/>
</dbReference>
<dbReference type="PROSITE" id="PS50011">
    <property type="entry name" value="PROTEIN_KINASE_DOM"/>
    <property type="match status" value="1"/>
</dbReference>
<dbReference type="PROSITE" id="PS00108">
    <property type="entry name" value="PROTEIN_KINASE_ST"/>
    <property type="match status" value="1"/>
</dbReference>
<gene>
    <name type="primary">pkn3</name>
</gene>
<feature type="chain" id="PRO_0000171229" description="Serine/threonine-protein kinase pkn3">
    <location>
        <begin position="1"/>
        <end position="547"/>
    </location>
</feature>
<feature type="domain" description="Protein kinase" evidence="1">
    <location>
        <begin position="18"/>
        <end position="288"/>
    </location>
</feature>
<feature type="region of interest" description="Disordered" evidence="3">
    <location>
        <begin position="290"/>
        <end position="327"/>
    </location>
</feature>
<feature type="compositionally biased region" description="Basic and acidic residues" evidence="3">
    <location>
        <begin position="290"/>
        <end position="299"/>
    </location>
</feature>
<feature type="active site" description="Proton acceptor" evidence="1 2">
    <location>
        <position position="142"/>
    </location>
</feature>
<feature type="binding site" evidence="1">
    <location>
        <begin position="24"/>
        <end position="32"/>
    </location>
    <ligand>
        <name>ATP</name>
        <dbReference type="ChEBI" id="CHEBI:30616"/>
    </ligand>
</feature>
<feature type="binding site" evidence="1">
    <location>
        <position position="47"/>
    </location>
    <ligand>
        <name>ATP</name>
        <dbReference type="ChEBI" id="CHEBI:30616"/>
    </ligand>
</feature>
<comment type="catalytic activity">
    <reaction>
        <text>L-seryl-[protein] + ATP = O-phospho-L-seryl-[protein] + ADP + H(+)</text>
        <dbReference type="Rhea" id="RHEA:17989"/>
        <dbReference type="Rhea" id="RHEA-COMP:9863"/>
        <dbReference type="Rhea" id="RHEA-COMP:11604"/>
        <dbReference type="ChEBI" id="CHEBI:15378"/>
        <dbReference type="ChEBI" id="CHEBI:29999"/>
        <dbReference type="ChEBI" id="CHEBI:30616"/>
        <dbReference type="ChEBI" id="CHEBI:83421"/>
        <dbReference type="ChEBI" id="CHEBI:456216"/>
        <dbReference type="EC" id="2.7.11.1"/>
    </reaction>
</comment>
<comment type="catalytic activity">
    <reaction>
        <text>L-threonyl-[protein] + ATP = O-phospho-L-threonyl-[protein] + ADP + H(+)</text>
        <dbReference type="Rhea" id="RHEA:46608"/>
        <dbReference type="Rhea" id="RHEA-COMP:11060"/>
        <dbReference type="Rhea" id="RHEA-COMP:11605"/>
        <dbReference type="ChEBI" id="CHEBI:15378"/>
        <dbReference type="ChEBI" id="CHEBI:30013"/>
        <dbReference type="ChEBI" id="CHEBI:30616"/>
        <dbReference type="ChEBI" id="CHEBI:61977"/>
        <dbReference type="ChEBI" id="CHEBI:456216"/>
        <dbReference type="EC" id="2.7.11.1"/>
    </reaction>
</comment>
<comment type="similarity">
    <text evidence="1">Belongs to the protein kinase superfamily. Ser/Thr protein kinase family.</text>
</comment>
<organism>
    <name type="scientific">Myxococcus xanthus</name>
    <dbReference type="NCBI Taxonomy" id="34"/>
    <lineage>
        <taxon>Bacteria</taxon>
        <taxon>Pseudomonadati</taxon>
        <taxon>Myxococcota</taxon>
        <taxon>Myxococcia</taxon>
        <taxon>Myxococcales</taxon>
        <taxon>Cystobacterineae</taxon>
        <taxon>Myxococcaceae</taxon>
        <taxon>Myxococcus</taxon>
    </lineage>
</organism>
<keyword id="KW-0067">ATP-binding</keyword>
<keyword id="KW-0418">Kinase</keyword>
<keyword id="KW-0547">Nucleotide-binding</keyword>
<keyword id="KW-0723">Serine/threonine-protein kinase</keyword>
<keyword id="KW-0808">Transferase</keyword>
<protein>
    <recommendedName>
        <fullName>Serine/threonine-protein kinase pkn3</fullName>
        <ecNumber>2.7.11.1</ecNumber>
    </recommendedName>
</protein>